<reference key="1">
    <citation type="journal article" date="2001" name="Lancet">
        <title>Whole genome sequencing of meticillin-resistant Staphylococcus aureus.</title>
        <authorList>
            <person name="Kuroda M."/>
            <person name="Ohta T."/>
            <person name="Uchiyama I."/>
            <person name="Baba T."/>
            <person name="Yuzawa H."/>
            <person name="Kobayashi I."/>
            <person name="Cui L."/>
            <person name="Oguchi A."/>
            <person name="Aoki K."/>
            <person name="Nagai Y."/>
            <person name="Lian J.-Q."/>
            <person name="Ito T."/>
            <person name="Kanamori M."/>
            <person name="Matsumaru H."/>
            <person name="Maruyama A."/>
            <person name="Murakami H."/>
            <person name="Hosoyama A."/>
            <person name="Mizutani-Ui Y."/>
            <person name="Takahashi N.K."/>
            <person name="Sawano T."/>
            <person name="Inoue R."/>
            <person name="Kaito C."/>
            <person name="Sekimizu K."/>
            <person name="Hirakawa H."/>
            <person name="Kuhara S."/>
            <person name="Goto S."/>
            <person name="Yabuzaki J."/>
            <person name="Kanehisa M."/>
            <person name="Yamashita A."/>
            <person name="Oshima K."/>
            <person name="Furuya K."/>
            <person name="Yoshino C."/>
            <person name="Shiba T."/>
            <person name="Hattori M."/>
            <person name="Ogasawara N."/>
            <person name="Hayashi H."/>
            <person name="Hiramatsu K."/>
        </authorList>
    </citation>
    <scope>NUCLEOTIDE SEQUENCE [LARGE SCALE GENOMIC DNA]</scope>
    <source>
        <strain>N315</strain>
    </source>
</reference>
<reference key="2">
    <citation type="journal article" date="2005" name="J. Microbiol. Methods">
        <title>Correlation of proteomic and transcriptomic profiles of Staphylococcus aureus during the post-exponential phase of growth.</title>
        <authorList>
            <person name="Scherl A."/>
            <person name="Francois P."/>
            <person name="Bento M."/>
            <person name="Deshusses J.M."/>
            <person name="Charbonnier Y."/>
            <person name="Converset V."/>
            <person name="Huyghe A."/>
            <person name="Walter N."/>
            <person name="Hoogland C."/>
            <person name="Appel R.D."/>
            <person name="Sanchez J.-C."/>
            <person name="Zimmermann-Ivol C.G."/>
            <person name="Corthals G.L."/>
            <person name="Hochstrasser D.F."/>
            <person name="Schrenzel J."/>
        </authorList>
    </citation>
    <scope>IDENTIFICATION BY MASS SPECTROMETRY</scope>
    <source>
        <strain>N315</strain>
    </source>
</reference>
<reference key="3">
    <citation type="submission" date="2007-10" db="UniProtKB">
        <title>Shotgun proteomic analysis of total and membrane protein extracts of S. aureus strain N315.</title>
        <authorList>
            <person name="Vaezzadeh A.R."/>
            <person name="Deshusses J."/>
            <person name="Lescuyer P."/>
            <person name="Hochstrasser D.F."/>
        </authorList>
    </citation>
    <scope>IDENTIFICATION BY MASS SPECTROMETRY [LARGE SCALE ANALYSIS]</scope>
    <source>
        <strain>N315</strain>
    </source>
</reference>
<organism>
    <name type="scientific">Staphylococcus aureus (strain N315)</name>
    <dbReference type="NCBI Taxonomy" id="158879"/>
    <lineage>
        <taxon>Bacteria</taxon>
        <taxon>Bacillati</taxon>
        <taxon>Bacillota</taxon>
        <taxon>Bacilli</taxon>
        <taxon>Bacillales</taxon>
        <taxon>Staphylococcaceae</taxon>
        <taxon>Staphylococcus</taxon>
    </lineage>
</organism>
<accession>Q99TF4</accession>
<evidence type="ECO:0000250" key="1"/>
<evidence type="ECO:0000255" key="2"/>
<evidence type="ECO:0000305" key="3"/>
<keyword id="KW-0520">NAD</keyword>
<keyword id="KW-0560">Oxidoreductase</keyword>
<comment type="function">
    <text evidence="1">May play a role in cell wall synthesis as L-alanine is an important constituent of the peptidoglycan layer.</text>
</comment>
<comment type="catalytic activity">
    <reaction>
        <text>L-alanine + NAD(+) + H2O = pyruvate + NH4(+) + NADH + H(+)</text>
        <dbReference type="Rhea" id="RHEA:18405"/>
        <dbReference type="ChEBI" id="CHEBI:15361"/>
        <dbReference type="ChEBI" id="CHEBI:15377"/>
        <dbReference type="ChEBI" id="CHEBI:15378"/>
        <dbReference type="ChEBI" id="CHEBI:28938"/>
        <dbReference type="ChEBI" id="CHEBI:57540"/>
        <dbReference type="ChEBI" id="CHEBI:57945"/>
        <dbReference type="ChEBI" id="CHEBI:57972"/>
        <dbReference type="EC" id="1.4.1.1"/>
    </reaction>
</comment>
<comment type="pathway">
    <text>Amino-acid degradation; L-alanine degradation via dehydrogenase pathway; NH(3) and pyruvate from L-alanine: step 1/1.</text>
</comment>
<comment type="similarity">
    <text evidence="3">Belongs to the AlaDH/PNT family.</text>
</comment>
<gene>
    <name type="primary">ald2</name>
    <name type="ordered locus">SA1531</name>
</gene>
<protein>
    <recommendedName>
        <fullName>Alanine dehydrogenase 2</fullName>
        <ecNumber>1.4.1.1</ecNumber>
    </recommendedName>
</protein>
<proteinExistence type="evidence at protein level"/>
<sequence>MKIGIPREIKNNENRVGLSPSGVHALVESGHTVLVETNAGSGSFFEDVDYKEAGAEIVAEQAKVWDVDMVIKVKEPLESEYPYFKEGLVLFTYLHLANEEKLTQALIDRKVISIAYETVQLPDRSSPLLSPMSEVAGRMSAQVGAEFLQKLNGGMGILLGGVPGVPKGKVTIIGGGQAGTNAAKIALGLGADVTILDVNPKRLQQLDDLFGGRVHTIMSNPLNIELYVKQSDLVIGAVLIPGAKAPRLVTEDMIKQMKNGSVIIDIAIDQGGIFETTDKITTHDDPTYIKHGVVHYAVANMPGAVPRTSTLALNNATLPYALMLANKGYREAFKSNQPLSLGLNTYKGHVTNKGVAEAFEMEYKSVEEALQL</sequence>
<dbReference type="EC" id="1.4.1.1"/>
<dbReference type="EMBL" id="BA000018">
    <property type="protein sequence ID" value="BAB42798.1"/>
    <property type="molecule type" value="Genomic_DNA"/>
</dbReference>
<dbReference type="PIR" id="A89955">
    <property type="entry name" value="A89955"/>
</dbReference>
<dbReference type="SMR" id="Q99TF4"/>
<dbReference type="EnsemblBacteria" id="BAB42798">
    <property type="protein sequence ID" value="BAB42798"/>
    <property type="gene ID" value="BAB42798"/>
</dbReference>
<dbReference type="KEGG" id="sau:SA1531"/>
<dbReference type="HOGENOM" id="CLU_003376_3_0_9"/>
<dbReference type="UniPathway" id="UPA00527">
    <property type="reaction ID" value="UER00585"/>
</dbReference>
<dbReference type="GO" id="GO:0005886">
    <property type="term" value="C:plasma membrane"/>
    <property type="evidence" value="ECO:0007669"/>
    <property type="project" value="TreeGrafter"/>
</dbReference>
<dbReference type="GO" id="GO:0000286">
    <property type="term" value="F:alanine dehydrogenase activity"/>
    <property type="evidence" value="ECO:0007669"/>
    <property type="project" value="UniProtKB-EC"/>
</dbReference>
<dbReference type="GO" id="GO:0042853">
    <property type="term" value="P:L-alanine catabolic process"/>
    <property type="evidence" value="ECO:0007669"/>
    <property type="project" value="UniProtKB-UniPathway"/>
</dbReference>
<dbReference type="CDD" id="cd05305">
    <property type="entry name" value="L-AlaDH"/>
    <property type="match status" value="1"/>
</dbReference>
<dbReference type="FunFam" id="3.40.50.720:FF:000049">
    <property type="entry name" value="Alanine dehydrogenase"/>
    <property type="match status" value="1"/>
</dbReference>
<dbReference type="Gene3D" id="3.40.50.720">
    <property type="entry name" value="NAD(P)-binding Rossmann-like Domain"/>
    <property type="match status" value="2"/>
</dbReference>
<dbReference type="InterPro" id="IPR008141">
    <property type="entry name" value="Ala_DH"/>
</dbReference>
<dbReference type="InterPro" id="IPR008143">
    <property type="entry name" value="Ala_DH/PNT_CS2"/>
</dbReference>
<dbReference type="InterPro" id="IPR008142">
    <property type="entry name" value="AlaDH/PNT_CS1"/>
</dbReference>
<dbReference type="InterPro" id="IPR007886">
    <property type="entry name" value="AlaDH/PNT_N"/>
</dbReference>
<dbReference type="InterPro" id="IPR007698">
    <property type="entry name" value="AlaDH/PNT_NAD(H)-bd"/>
</dbReference>
<dbReference type="InterPro" id="IPR036291">
    <property type="entry name" value="NAD(P)-bd_dom_sf"/>
</dbReference>
<dbReference type="NCBIfam" id="TIGR00518">
    <property type="entry name" value="alaDH"/>
    <property type="match status" value="1"/>
</dbReference>
<dbReference type="PANTHER" id="PTHR42795">
    <property type="entry name" value="ALANINE DEHYDROGENASE"/>
    <property type="match status" value="1"/>
</dbReference>
<dbReference type="PANTHER" id="PTHR42795:SF1">
    <property type="entry name" value="ALANINE DEHYDROGENASE"/>
    <property type="match status" value="1"/>
</dbReference>
<dbReference type="Pfam" id="PF01262">
    <property type="entry name" value="AlaDh_PNT_C"/>
    <property type="match status" value="1"/>
</dbReference>
<dbReference type="Pfam" id="PF05222">
    <property type="entry name" value="AlaDh_PNT_N"/>
    <property type="match status" value="1"/>
</dbReference>
<dbReference type="PIRSF" id="PIRSF000183">
    <property type="entry name" value="Alanine_dh"/>
    <property type="match status" value="1"/>
</dbReference>
<dbReference type="SMART" id="SM01002">
    <property type="entry name" value="AlaDh_PNT_C"/>
    <property type="match status" value="1"/>
</dbReference>
<dbReference type="SMART" id="SM01003">
    <property type="entry name" value="AlaDh_PNT_N"/>
    <property type="match status" value="1"/>
</dbReference>
<dbReference type="SUPFAM" id="SSF52283">
    <property type="entry name" value="Formate/glycerate dehydrogenase catalytic domain-like"/>
    <property type="match status" value="1"/>
</dbReference>
<dbReference type="SUPFAM" id="SSF51735">
    <property type="entry name" value="NAD(P)-binding Rossmann-fold domains"/>
    <property type="match status" value="1"/>
</dbReference>
<dbReference type="PROSITE" id="PS00836">
    <property type="entry name" value="ALADH_PNT_1"/>
    <property type="match status" value="1"/>
</dbReference>
<dbReference type="PROSITE" id="PS00837">
    <property type="entry name" value="ALADH_PNT_2"/>
    <property type="match status" value="1"/>
</dbReference>
<name>DHA2_STAAN</name>
<feature type="chain" id="PRO_0000199003" description="Alanine dehydrogenase 2">
    <location>
        <begin position="1"/>
        <end position="372"/>
    </location>
</feature>
<feature type="active site" evidence="2">
    <location>
        <position position="95"/>
    </location>
</feature>
<feature type="binding site" evidence="1">
    <location>
        <begin position="169"/>
        <end position="199"/>
    </location>
    <ligand>
        <name>NAD(+)</name>
        <dbReference type="ChEBI" id="CHEBI:57540"/>
    </ligand>
</feature>